<keyword id="KW-0054">Arabinose catabolism</keyword>
<keyword id="KW-0067">ATP-binding</keyword>
<keyword id="KW-0119">Carbohydrate metabolism</keyword>
<keyword id="KW-0418">Kinase</keyword>
<keyword id="KW-0547">Nucleotide-binding</keyword>
<keyword id="KW-0808">Transferase</keyword>
<dbReference type="EC" id="2.7.1.16" evidence="1"/>
<dbReference type="EMBL" id="CP000046">
    <property type="protein sequence ID" value="AAW37708.1"/>
    <property type="molecule type" value="Genomic_DNA"/>
</dbReference>
<dbReference type="RefSeq" id="WP_000122340.1">
    <property type="nucleotide sequence ID" value="NZ_JBGOFO010000009.1"/>
</dbReference>
<dbReference type="SMR" id="Q5HIC3"/>
<dbReference type="KEGG" id="sac:SACOL0598"/>
<dbReference type="HOGENOM" id="CLU_009281_9_1_9"/>
<dbReference type="UniPathway" id="UPA00145">
    <property type="reaction ID" value="UER00566"/>
</dbReference>
<dbReference type="Proteomes" id="UP000000530">
    <property type="component" value="Chromosome"/>
</dbReference>
<dbReference type="GO" id="GO:0005737">
    <property type="term" value="C:cytoplasm"/>
    <property type="evidence" value="ECO:0007669"/>
    <property type="project" value="TreeGrafter"/>
</dbReference>
<dbReference type="GO" id="GO:0005524">
    <property type="term" value="F:ATP binding"/>
    <property type="evidence" value="ECO:0007669"/>
    <property type="project" value="UniProtKB-KW"/>
</dbReference>
<dbReference type="GO" id="GO:0019150">
    <property type="term" value="F:D-ribulokinase activity"/>
    <property type="evidence" value="ECO:0007669"/>
    <property type="project" value="RHEA"/>
</dbReference>
<dbReference type="GO" id="GO:0008741">
    <property type="term" value="F:ribulokinase activity"/>
    <property type="evidence" value="ECO:0007669"/>
    <property type="project" value="UniProtKB-UniRule"/>
</dbReference>
<dbReference type="GO" id="GO:0019569">
    <property type="term" value="P:L-arabinose catabolic process to xylulose 5-phosphate"/>
    <property type="evidence" value="ECO:0007669"/>
    <property type="project" value="UniProtKB-UniRule"/>
</dbReference>
<dbReference type="CDD" id="cd07781">
    <property type="entry name" value="ASKHA_NBD_FGGY_L-RBK"/>
    <property type="match status" value="1"/>
</dbReference>
<dbReference type="Gene3D" id="1.20.58.2240">
    <property type="match status" value="1"/>
</dbReference>
<dbReference type="Gene3D" id="3.30.420.40">
    <property type="match status" value="1"/>
</dbReference>
<dbReference type="HAMAP" id="MF_00520">
    <property type="entry name" value="Ribulokinase"/>
    <property type="match status" value="1"/>
</dbReference>
<dbReference type="InterPro" id="IPR043129">
    <property type="entry name" value="ATPase_NBD"/>
</dbReference>
<dbReference type="InterPro" id="IPR000577">
    <property type="entry name" value="Carb_kinase_FGGY"/>
</dbReference>
<dbReference type="InterPro" id="IPR018485">
    <property type="entry name" value="FGGY_C"/>
</dbReference>
<dbReference type="InterPro" id="IPR018484">
    <property type="entry name" value="FGGY_N"/>
</dbReference>
<dbReference type="InterPro" id="IPR005929">
    <property type="entry name" value="Ribulokinase"/>
</dbReference>
<dbReference type="NCBIfam" id="NF003154">
    <property type="entry name" value="PRK04123.1"/>
    <property type="match status" value="1"/>
</dbReference>
<dbReference type="PANTHER" id="PTHR43435:SF4">
    <property type="entry name" value="FGGY CARBOHYDRATE KINASE DOMAIN-CONTAINING PROTEIN"/>
    <property type="match status" value="1"/>
</dbReference>
<dbReference type="PANTHER" id="PTHR43435">
    <property type="entry name" value="RIBULOKINASE"/>
    <property type="match status" value="1"/>
</dbReference>
<dbReference type="Pfam" id="PF02782">
    <property type="entry name" value="FGGY_C"/>
    <property type="match status" value="1"/>
</dbReference>
<dbReference type="Pfam" id="PF00370">
    <property type="entry name" value="FGGY_N"/>
    <property type="match status" value="1"/>
</dbReference>
<dbReference type="PIRSF" id="PIRSF000538">
    <property type="entry name" value="GlpK"/>
    <property type="match status" value="1"/>
</dbReference>
<dbReference type="SUPFAM" id="SSF53067">
    <property type="entry name" value="Actin-like ATPase domain"/>
    <property type="match status" value="2"/>
</dbReference>
<sequence>MSYSIGIDYGTASGRVFLINTTNGQVVSKFVKPYTHGVIESELNGLKIPHTYALQNSNDYLEIMEEGISYIVRESKIDPDNIVGIGIDFTSSTIIFTDENLNPVHNLKQFKNNPHAYVKLWKHHGAYKEAEKLYQTAIENNNKWLGHYGYNVSSEWMIPKIMEVMNRAPEIMEKTAYIMEAGDWIVNKLTNKNVRSNCGLGFKAFWEEETGFHYDLFDKIDPKLSKVIQDKVSAPVVNIGEAVGKLDDKMAQKLGLSKETMVSPFIIDAHASLLGIGSEKDKEMTMVMGTSTCHLMLNEKQHQVPGISGSVKGAIIPELFAYEAGQSAVGDLFEYVAKQAPKSYVDEAENRNMTVFELMNEKIKHQMPGESGLIALDWHNGNRSVLSDSNLTGCIFGLTLQTKHEDIYRAYLEATAFGTKMIMQQYQDWHMEVEKVFACGGIPKKNAVMMDIYANVLNKKLIVMDSEYAPAIGAAILGAVSGGAHNSINDAVDAMKEPILYEINPEAEKVQRYETLFKAYKALHDIHGYKKANIMKDIQSLRVEG</sequence>
<protein>
    <recommendedName>
        <fullName evidence="1">Ribulokinase</fullName>
        <ecNumber evidence="1">2.7.1.16</ecNumber>
    </recommendedName>
</protein>
<organism>
    <name type="scientific">Staphylococcus aureus (strain COL)</name>
    <dbReference type="NCBI Taxonomy" id="93062"/>
    <lineage>
        <taxon>Bacteria</taxon>
        <taxon>Bacillati</taxon>
        <taxon>Bacillota</taxon>
        <taxon>Bacilli</taxon>
        <taxon>Bacillales</taxon>
        <taxon>Staphylococcaceae</taxon>
        <taxon>Staphylococcus</taxon>
    </lineage>
</organism>
<gene>
    <name evidence="1" type="primary">araB</name>
    <name type="ordered locus">SACOL0598</name>
</gene>
<feature type="chain" id="PRO_0000198366" description="Ribulokinase">
    <location>
        <begin position="1"/>
        <end position="545"/>
    </location>
</feature>
<reference key="1">
    <citation type="journal article" date="2005" name="J. Bacteriol.">
        <title>Insights on evolution of virulence and resistance from the complete genome analysis of an early methicillin-resistant Staphylococcus aureus strain and a biofilm-producing methicillin-resistant Staphylococcus epidermidis strain.</title>
        <authorList>
            <person name="Gill S.R."/>
            <person name="Fouts D.E."/>
            <person name="Archer G.L."/>
            <person name="Mongodin E.F."/>
            <person name="DeBoy R.T."/>
            <person name="Ravel J."/>
            <person name="Paulsen I.T."/>
            <person name="Kolonay J.F."/>
            <person name="Brinkac L.M."/>
            <person name="Beanan M.J."/>
            <person name="Dodson R.J."/>
            <person name="Daugherty S.C."/>
            <person name="Madupu R."/>
            <person name="Angiuoli S.V."/>
            <person name="Durkin A.S."/>
            <person name="Haft D.H."/>
            <person name="Vamathevan J.J."/>
            <person name="Khouri H."/>
            <person name="Utterback T.R."/>
            <person name="Lee C."/>
            <person name="Dimitrov G."/>
            <person name="Jiang L."/>
            <person name="Qin H."/>
            <person name="Weidman J."/>
            <person name="Tran K."/>
            <person name="Kang K.H."/>
            <person name="Hance I.R."/>
            <person name="Nelson K.E."/>
            <person name="Fraser C.M."/>
        </authorList>
    </citation>
    <scope>NUCLEOTIDE SEQUENCE [LARGE SCALE GENOMIC DNA]</scope>
    <source>
        <strain>COL</strain>
    </source>
</reference>
<evidence type="ECO:0000255" key="1">
    <source>
        <dbReference type="HAMAP-Rule" id="MF_00520"/>
    </source>
</evidence>
<name>ARAB_STAAC</name>
<proteinExistence type="inferred from homology"/>
<accession>Q5HIC3</accession>
<comment type="catalytic activity">
    <reaction evidence="1">
        <text>D-ribulose + ATP = D-ribulose 5-phosphate + ADP + H(+)</text>
        <dbReference type="Rhea" id="RHEA:17601"/>
        <dbReference type="ChEBI" id="CHEBI:15378"/>
        <dbReference type="ChEBI" id="CHEBI:17173"/>
        <dbReference type="ChEBI" id="CHEBI:30616"/>
        <dbReference type="ChEBI" id="CHEBI:58121"/>
        <dbReference type="ChEBI" id="CHEBI:456216"/>
        <dbReference type="EC" id="2.7.1.16"/>
    </reaction>
</comment>
<comment type="catalytic activity">
    <reaction evidence="1">
        <text>L-ribulose + ATP = L-ribulose 5-phosphate + ADP + H(+)</text>
        <dbReference type="Rhea" id="RHEA:22072"/>
        <dbReference type="ChEBI" id="CHEBI:15378"/>
        <dbReference type="ChEBI" id="CHEBI:16880"/>
        <dbReference type="ChEBI" id="CHEBI:30616"/>
        <dbReference type="ChEBI" id="CHEBI:58226"/>
        <dbReference type="ChEBI" id="CHEBI:456216"/>
        <dbReference type="EC" id="2.7.1.16"/>
    </reaction>
</comment>
<comment type="pathway">
    <text evidence="1">Carbohydrate degradation; L-arabinose degradation via L-ribulose; D-xylulose 5-phosphate from L-arabinose (bacterial route): step 2/3.</text>
</comment>
<comment type="similarity">
    <text evidence="1">Belongs to the ribulokinase family.</text>
</comment>